<gene>
    <name evidence="1" type="primary">argH</name>
    <name type="ordered locus">YPTS_0118</name>
</gene>
<sequence>MALWGGRFSQAADQRFKQFNDSLRFDYRLAEQDIIGSVAWSKALVTVGVLNADEQQQLEQALSVLLEEVQANPHAILASDAEDIHSWVETKLIDKVGDLGKKLHTGRSRNDQVATDLKLWCKFQITELQTAVQQLQQALVMTAEANQDAVMPGYTHLQRAQPVTFAHWCLAYVEMLSRDESRLQDTLKRLDVSPLGCGALAGTAYAIDREQLAGWLGFASATRNSLDSVSDRDHVLELLSDASIGMVHLSRFAEDLIFFNSGEAAFVDLSDRVTSGSSLMPQKKNPDALELIRGKCGRVQGALTGMTMTLKGLPLAYNKDMQEDKEGLFDALNTWLDCLHMAALVLDGIQVKRPRCKEAAEQGYANATELADYLVAKGVPFREAHHIVGEAVVEAIRQGKALEALALSDLQQFSSVIGDDVYPILALQSCLDKRVAKGGVSPQQVASAIAEAKARLF</sequence>
<protein>
    <recommendedName>
        <fullName evidence="1">Argininosuccinate lyase</fullName>
        <shortName evidence="1">ASAL</shortName>
        <ecNumber evidence="1">4.3.2.1</ecNumber>
    </recommendedName>
    <alternativeName>
        <fullName evidence="1">Arginosuccinase</fullName>
    </alternativeName>
</protein>
<proteinExistence type="inferred from homology"/>
<comment type="catalytic activity">
    <reaction evidence="1">
        <text>2-(N(omega)-L-arginino)succinate = fumarate + L-arginine</text>
        <dbReference type="Rhea" id="RHEA:24020"/>
        <dbReference type="ChEBI" id="CHEBI:29806"/>
        <dbReference type="ChEBI" id="CHEBI:32682"/>
        <dbReference type="ChEBI" id="CHEBI:57472"/>
        <dbReference type="EC" id="4.3.2.1"/>
    </reaction>
</comment>
<comment type="pathway">
    <text evidence="1">Amino-acid biosynthesis; L-arginine biosynthesis; L-arginine from L-ornithine and carbamoyl phosphate: step 3/3.</text>
</comment>
<comment type="subcellular location">
    <subcellularLocation>
        <location evidence="1">Cytoplasm</location>
    </subcellularLocation>
</comment>
<comment type="similarity">
    <text evidence="1">Belongs to the lyase 1 family. Argininosuccinate lyase subfamily.</text>
</comment>
<organism>
    <name type="scientific">Yersinia pseudotuberculosis serotype IB (strain PB1/+)</name>
    <dbReference type="NCBI Taxonomy" id="502801"/>
    <lineage>
        <taxon>Bacteria</taxon>
        <taxon>Pseudomonadati</taxon>
        <taxon>Pseudomonadota</taxon>
        <taxon>Gammaproteobacteria</taxon>
        <taxon>Enterobacterales</taxon>
        <taxon>Yersiniaceae</taxon>
        <taxon>Yersinia</taxon>
    </lineage>
</organism>
<accession>B2JZE4</accession>
<feature type="chain" id="PRO_1000089133" description="Argininosuccinate lyase">
    <location>
        <begin position="1"/>
        <end position="457"/>
    </location>
</feature>
<reference key="1">
    <citation type="submission" date="2008-04" db="EMBL/GenBank/DDBJ databases">
        <title>Complete sequence of Yersinia pseudotuberculosis PB1/+.</title>
        <authorList>
            <person name="Copeland A."/>
            <person name="Lucas S."/>
            <person name="Lapidus A."/>
            <person name="Glavina del Rio T."/>
            <person name="Dalin E."/>
            <person name="Tice H."/>
            <person name="Bruce D."/>
            <person name="Goodwin L."/>
            <person name="Pitluck S."/>
            <person name="Munk A.C."/>
            <person name="Brettin T."/>
            <person name="Detter J.C."/>
            <person name="Han C."/>
            <person name="Tapia R."/>
            <person name="Schmutz J."/>
            <person name="Larimer F."/>
            <person name="Land M."/>
            <person name="Hauser L."/>
            <person name="Challacombe J.F."/>
            <person name="Green L."/>
            <person name="Lindler L.E."/>
            <person name="Nikolich M.P."/>
            <person name="Richardson P."/>
        </authorList>
    </citation>
    <scope>NUCLEOTIDE SEQUENCE [LARGE SCALE GENOMIC DNA]</scope>
    <source>
        <strain>PB1/+</strain>
    </source>
</reference>
<evidence type="ECO:0000255" key="1">
    <source>
        <dbReference type="HAMAP-Rule" id="MF_00006"/>
    </source>
</evidence>
<keyword id="KW-0028">Amino-acid biosynthesis</keyword>
<keyword id="KW-0055">Arginine biosynthesis</keyword>
<keyword id="KW-0963">Cytoplasm</keyword>
<keyword id="KW-0456">Lyase</keyword>
<name>ARLY_YERPB</name>
<dbReference type="EC" id="4.3.2.1" evidence="1"/>
<dbReference type="EMBL" id="CP001048">
    <property type="protein sequence ID" value="ACC87117.1"/>
    <property type="molecule type" value="Genomic_DNA"/>
</dbReference>
<dbReference type="RefSeq" id="WP_011191469.1">
    <property type="nucleotide sequence ID" value="NZ_CP009780.1"/>
</dbReference>
<dbReference type="SMR" id="B2JZE4"/>
<dbReference type="GeneID" id="49787917"/>
<dbReference type="KEGG" id="ypb:YPTS_0118"/>
<dbReference type="PATRIC" id="fig|502801.10.peg.3795"/>
<dbReference type="UniPathway" id="UPA00068">
    <property type="reaction ID" value="UER00114"/>
</dbReference>
<dbReference type="GO" id="GO:0005829">
    <property type="term" value="C:cytosol"/>
    <property type="evidence" value="ECO:0007669"/>
    <property type="project" value="TreeGrafter"/>
</dbReference>
<dbReference type="GO" id="GO:0004056">
    <property type="term" value="F:argininosuccinate lyase activity"/>
    <property type="evidence" value="ECO:0007669"/>
    <property type="project" value="UniProtKB-UniRule"/>
</dbReference>
<dbReference type="GO" id="GO:0042450">
    <property type="term" value="P:arginine biosynthetic process via ornithine"/>
    <property type="evidence" value="ECO:0007669"/>
    <property type="project" value="InterPro"/>
</dbReference>
<dbReference type="GO" id="GO:0006526">
    <property type="term" value="P:L-arginine biosynthetic process"/>
    <property type="evidence" value="ECO:0007669"/>
    <property type="project" value="UniProtKB-UniRule"/>
</dbReference>
<dbReference type="CDD" id="cd01359">
    <property type="entry name" value="Argininosuccinate_lyase"/>
    <property type="match status" value="1"/>
</dbReference>
<dbReference type="FunFam" id="1.10.275.10:FF:000004">
    <property type="entry name" value="Argininosuccinate lyase"/>
    <property type="match status" value="1"/>
</dbReference>
<dbReference type="FunFam" id="1.10.40.30:FF:000001">
    <property type="entry name" value="Argininosuccinate lyase"/>
    <property type="match status" value="1"/>
</dbReference>
<dbReference type="FunFam" id="1.20.200.10:FF:000006">
    <property type="entry name" value="Argininosuccinate lyase"/>
    <property type="match status" value="1"/>
</dbReference>
<dbReference type="Gene3D" id="1.10.40.30">
    <property type="entry name" value="Fumarase/aspartase (C-terminal domain)"/>
    <property type="match status" value="1"/>
</dbReference>
<dbReference type="Gene3D" id="1.20.200.10">
    <property type="entry name" value="Fumarase/aspartase (Central domain)"/>
    <property type="match status" value="1"/>
</dbReference>
<dbReference type="Gene3D" id="1.10.275.10">
    <property type="entry name" value="Fumarase/aspartase (N-terminal domain)"/>
    <property type="match status" value="1"/>
</dbReference>
<dbReference type="HAMAP" id="MF_00006">
    <property type="entry name" value="Arg_succ_lyase"/>
    <property type="match status" value="1"/>
</dbReference>
<dbReference type="InterPro" id="IPR029419">
    <property type="entry name" value="Arg_succ_lyase_C"/>
</dbReference>
<dbReference type="InterPro" id="IPR009049">
    <property type="entry name" value="Argininosuccinate_lyase"/>
</dbReference>
<dbReference type="InterPro" id="IPR024083">
    <property type="entry name" value="Fumarase/histidase_N"/>
</dbReference>
<dbReference type="InterPro" id="IPR020557">
    <property type="entry name" value="Fumarate_lyase_CS"/>
</dbReference>
<dbReference type="InterPro" id="IPR000362">
    <property type="entry name" value="Fumarate_lyase_fam"/>
</dbReference>
<dbReference type="InterPro" id="IPR022761">
    <property type="entry name" value="Fumarate_lyase_N"/>
</dbReference>
<dbReference type="InterPro" id="IPR008948">
    <property type="entry name" value="L-Aspartase-like"/>
</dbReference>
<dbReference type="NCBIfam" id="TIGR00838">
    <property type="entry name" value="argH"/>
    <property type="match status" value="1"/>
</dbReference>
<dbReference type="NCBIfam" id="NF008964">
    <property type="entry name" value="PRK12308.1"/>
    <property type="match status" value="1"/>
</dbReference>
<dbReference type="PANTHER" id="PTHR43814">
    <property type="entry name" value="ARGININOSUCCINATE LYASE"/>
    <property type="match status" value="1"/>
</dbReference>
<dbReference type="PANTHER" id="PTHR43814:SF1">
    <property type="entry name" value="ARGININOSUCCINATE LYASE"/>
    <property type="match status" value="1"/>
</dbReference>
<dbReference type="Pfam" id="PF14698">
    <property type="entry name" value="ASL_C2"/>
    <property type="match status" value="1"/>
</dbReference>
<dbReference type="Pfam" id="PF00206">
    <property type="entry name" value="Lyase_1"/>
    <property type="match status" value="1"/>
</dbReference>
<dbReference type="PRINTS" id="PR00145">
    <property type="entry name" value="ARGSUCLYASE"/>
</dbReference>
<dbReference type="PRINTS" id="PR00149">
    <property type="entry name" value="FUMRATELYASE"/>
</dbReference>
<dbReference type="SUPFAM" id="SSF48557">
    <property type="entry name" value="L-aspartase-like"/>
    <property type="match status" value="1"/>
</dbReference>
<dbReference type="PROSITE" id="PS00163">
    <property type="entry name" value="FUMARATE_LYASES"/>
    <property type="match status" value="1"/>
</dbReference>